<dbReference type="EC" id="1.1.1.23" evidence="1"/>
<dbReference type="EMBL" id="AP008934">
    <property type="protein sequence ID" value="BAE17574.1"/>
    <property type="molecule type" value="Genomic_DNA"/>
</dbReference>
<dbReference type="SMR" id="Q4A044"/>
<dbReference type="KEGG" id="ssp:SSP0429"/>
<dbReference type="eggNOG" id="COG0141">
    <property type="taxonomic scope" value="Bacteria"/>
</dbReference>
<dbReference type="HOGENOM" id="CLU_006732_3_3_9"/>
<dbReference type="OrthoDB" id="9805269at2"/>
<dbReference type="UniPathway" id="UPA00031">
    <property type="reaction ID" value="UER00014"/>
</dbReference>
<dbReference type="Proteomes" id="UP000006371">
    <property type="component" value="Chromosome"/>
</dbReference>
<dbReference type="GO" id="GO:0005829">
    <property type="term" value="C:cytosol"/>
    <property type="evidence" value="ECO:0007669"/>
    <property type="project" value="TreeGrafter"/>
</dbReference>
<dbReference type="GO" id="GO:0004399">
    <property type="term" value="F:histidinol dehydrogenase activity"/>
    <property type="evidence" value="ECO:0007669"/>
    <property type="project" value="UniProtKB-UniRule"/>
</dbReference>
<dbReference type="GO" id="GO:0051287">
    <property type="term" value="F:NAD binding"/>
    <property type="evidence" value="ECO:0007669"/>
    <property type="project" value="InterPro"/>
</dbReference>
<dbReference type="GO" id="GO:0008270">
    <property type="term" value="F:zinc ion binding"/>
    <property type="evidence" value="ECO:0007669"/>
    <property type="project" value="UniProtKB-UniRule"/>
</dbReference>
<dbReference type="GO" id="GO:0000105">
    <property type="term" value="P:L-histidine biosynthetic process"/>
    <property type="evidence" value="ECO:0007669"/>
    <property type="project" value="UniProtKB-UniRule"/>
</dbReference>
<dbReference type="CDD" id="cd06572">
    <property type="entry name" value="Histidinol_dh"/>
    <property type="match status" value="1"/>
</dbReference>
<dbReference type="FunFam" id="3.40.50.1980:FF:000001">
    <property type="entry name" value="Histidinol dehydrogenase"/>
    <property type="match status" value="1"/>
</dbReference>
<dbReference type="FunFam" id="3.40.50.1980:FF:000026">
    <property type="entry name" value="Histidinol dehydrogenase"/>
    <property type="match status" value="1"/>
</dbReference>
<dbReference type="Gene3D" id="1.20.5.1300">
    <property type="match status" value="1"/>
</dbReference>
<dbReference type="Gene3D" id="3.40.50.1980">
    <property type="entry name" value="Nitrogenase molybdenum iron protein domain"/>
    <property type="match status" value="2"/>
</dbReference>
<dbReference type="HAMAP" id="MF_01024">
    <property type="entry name" value="HisD"/>
    <property type="match status" value="1"/>
</dbReference>
<dbReference type="InterPro" id="IPR016161">
    <property type="entry name" value="Ald_DH/histidinol_DH"/>
</dbReference>
<dbReference type="InterPro" id="IPR001692">
    <property type="entry name" value="Histidinol_DH_CS"/>
</dbReference>
<dbReference type="InterPro" id="IPR022695">
    <property type="entry name" value="Histidinol_DH_monofunct"/>
</dbReference>
<dbReference type="InterPro" id="IPR012131">
    <property type="entry name" value="Hstdl_DH"/>
</dbReference>
<dbReference type="NCBIfam" id="TIGR00069">
    <property type="entry name" value="hisD"/>
    <property type="match status" value="1"/>
</dbReference>
<dbReference type="NCBIfam" id="NF010343">
    <property type="entry name" value="PRK13770.1"/>
    <property type="match status" value="1"/>
</dbReference>
<dbReference type="PANTHER" id="PTHR21256:SF2">
    <property type="entry name" value="HISTIDINE BIOSYNTHESIS TRIFUNCTIONAL PROTEIN"/>
    <property type="match status" value="1"/>
</dbReference>
<dbReference type="PANTHER" id="PTHR21256">
    <property type="entry name" value="HISTIDINOL DEHYDROGENASE HDH"/>
    <property type="match status" value="1"/>
</dbReference>
<dbReference type="Pfam" id="PF00815">
    <property type="entry name" value="Histidinol_dh"/>
    <property type="match status" value="1"/>
</dbReference>
<dbReference type="PIRSF" id="PIRSF000099">
    <property type="entry name" value="Histidinol_dh"/>
    <property type="match status" value="1"/>
</dbReference>
<dbReference type="PRINTS" id="PR00083">
    <property type="entry name" value="HOLDHDRGNASE"/>
</dbReference>
<dbReference type="SUPFAM" id="SSF53720">
    <property type="entry name" value="ALDH-like"/>
    <property type="match status" value="1"/>
</dbReference>
<dbReference type="PROSITE" id="PS00611">
    <property type="entry name" value="HISOL_DEHYDROGENASE"/>
    <property type="match status" value="1"/>
</dbReference>
<feature type="chain" id="PRO_0000135857" description="Histidinol dehydrogenase">
    <location>
        <begin position="1"/>
        <end position="423"/>
    </location>
</feature>
<feature type="active site" description="Proton acceptor" evidence="1">
    <location>
        <position position="313"/>
    </location>
</feature>
<feature type="active site" description="Proton acceptor" evidence="1">
    <location>
        <position position="314"/>
    </location>
</feature>
<feature type="binding site" evidence="1">
    <location>
        <position position="116"/>
    </location>
    <ligand>
        <name>NAD(+)</name>
        <dbReference type="ChEBI" id="CHEBI:57540"/>
    </ligand>
</feature>
<feature type="binding site" evidence="1">
    <location>
        <position position="177"/>
    </location>
    <ligand>
        <name>NAD(+)</name>
        <dbReference type="ChEBI" id="CHEBI:57540"/>
    </ligand>
</feature>
<feature type="binding site" evidence="1">
    <location>
        <position position="200"/>
    </location>
    <ligand>
        <name>NAD(+)</name>
        <dbReference type="ChEBI" id="CHEBI:57540"/>
    </ligand>
</feature>
<feature type="binding site" evidence="1">
    <location>
        <position position="223"/>
    </location>
    <ligand>
        <name>substrate</name>
    </ligand>
</feature>
<feature type="binding site" evidence="1">
    <location>
        <position position="245"/>
    </location>
    <ligand>
        <name>substrate</name>
    </ligand>
</feature>
<feature type="binding site" evidence="1">
    <location>
        <position position="245"/>
    </location>
    <ligand>
        <name>Zn(2+)</name>
        <dbReference type="ChEBI" id="CHEBI:29105"/>
    </ligand>
</feature>
<feature type="binding site" evidence="1">
    <location>
        <position position="248"/>
    </location>
    <ligand>
        <name>substrate</name>
    </ligand>
</feature>
<feature type="binding site" evidence="1">
    <location>
        <position position="248"/>
    </location>
    <ligand>
        <name>Zn(2+)</name>
        <dbReference type="ChEBI" id="CHEBI:29105"/>
    </ligand>
</feature>
<feature type="binding site" evidence="1">
    <location>
        <position position="314"/>
    </location>
    <ligand>
        <name>substrate</name>
    </ligand>
</feature>
<feature type="binding site" evidence="1">
    <location>
        <position position="347"/>
    </location>
    <ligand>
        <name>substrate</name>
    </ligand>
</feature>
<feature type="binding site" evidence="1">
    <location>
        <position position="347"/>
    </location>
    <ligand>
        <name>Zn(2+)</name>
        <dbReference type="ChEBI" id="CHEBI:29105"/>
    </ligand>
</feature>
<feature type="binding site" evidence="1">
    <location>
        <position position="401"/>
    </location>
    <ligand>
        <name>substrate</name>
    </ligand>
</feature>
<feature type="binding site" evidence="1">
    <location>
        <position position="406"/>
    </location>
    <ligand>
        <name>substrate</name>
    </ligand>
</feature>
<feature type="binding site" evidence="1">
    <location>
        <position position="406"/>
    </location>
    <ligand>
        <name>Zn(2+)</name>
        <dbReference type="ChEBI" id="CHEBI:29105"/>
    </ligand>
</feature>
<organism>
    <name type="scientific">Staphylococcus saprophyticus subsp. saprophyticus (strain ATCC 15305 / DSM 20229 / NCIMB 8711 / NCTC 7292 / S-41)</name>
    <dbReference type="NCBI Taxonomy" id="342451"/>
    <lineage>
        <taxon>Bacteria</taxon>
        <taxon>Bacillati</taxon>
        <taxon>Bacillota</taxon>
        <taxon>Bacilli</taxon>
        <taxon>Bacillales</taxon>
        <taxon>Staphylococcaceae</taxon>
        <taxon>Staphylococcus</taxon>
    </lineage>
</organism>
<sequence length="423" mass="47268">MIIDKTLFLKKYLNQSSLNEDLYPIVKDICENVRLHGDDALRNYNQQFDQVETCNLEVAYQTLENAYNRLDSDLREALQQSHARIQSYQESIKWTKQQGTSDCYELYHPLERVGVYVPGGKASYPSTVLMTVTLAKVAGVKNISVVTPPQLNGIPDIVLAACYIAGVDNVYQVGGAQSIAALAYGTETLPKVDKIVGPGNQFVAYAKKYLFGQVGIDQIAGPSEIALIIDDSADLDAIAYDVFAQAEHDELARTFVISEDEALLKQLEQKIQHILPQIERQSIVQASLNDNHFLIHVNNFSEACDLMNQIAPEHASIQTVSPHDYLNHVRYVGALFLGYYSPEVIGDYVAGPSHVLPTNQTARFTNGLSVNDFLTRHSVIDLSKDTFDTVELTARKLAHVEQLYNHEQSIEIRTSKEFNDDKN</sequence>
<reference key="1">
    <citation type="journal article" date="2005" name="Proc. Natl. Acad. Sci. U.S.A.">
        <title>Whole genome sequence of Staphylococcus saprophyticus reveals the pathogenesis of uncomplicated urinary tract infection.</title>
        <authorList>
            <person name="Kuroda M."/>
            <person name="Yamashita A."/>
            <person name="Hirakawa H."/>
            <person name="Kumano M."/>
            <person name="Morikawa K."/>
            <person name="Higashide M."/>
            <person name="Maruyama A."/>
            <person name="Inose Y."/>
            <person name="Matoba K."/>
            <person name="Toh H."/>
            <person name="Kuhara S."/>
            <person name="Hattori M."/>
            <person name="Ohta T."/>
        </authorList>
    </citation>
    <scope>NUCLEOTIDE SEQUENCE [LARGE SCALE GENOMIC DNA]</scope>
    <source>
        <strain>ATCC 15305 / DSM 20229 / NCIMB 8711 / NCTC 7292 / S-41</strain>
    </source>
</reference>
<comment type="function">
    <text evidence="1">Catalyzes the sequential NAD-dependent oxidations of L-histidinol to L-histidinaldehyde and then to L-histidine.</text>
</comment>
<comment type="catalytic activity">
    <reaction evidence="1">
        <text>L-histidinol + 2 NAD(+) + H2O = L-histidine + 2 NADH + 3 H(+)</text>
        <dbReference type="Rhea" id="RHEA:20641"/>
        <dbReference type="ChEBI" id="CHEBI:15377"/>
        <dbReference type="ChEBI" id="CHEBI:15378"/>
        <dbReference type="ChEBI" id="CHEBI:57540"/>
        <dbReference type="ChEBI" id="CHEBI:57595"/>
        <dbReference type="ChEBI" id="CHEBI:57699"/>
        <dbReference type="ChEBI" id="CHEBI:57945"/>
        <dbReference type="EC" id="1.1.1.23"/>
    </reaction>
</comment>
<comment type="cofactor">
    <cofactor evidence="1">
        <name>Zn(2+)</name>
        <dbReference type="ChEBI" id="CHEBI:29105"/>
    </cofactor>
    <text evidence="1">Binds 1 zinc ion per subunit.</text>
</comment>
<comment type="pathway">
    <text evidence="1">Amino-acid biosynthesis; L-histidine biosynthesis; L-histidine from 5-phospho-alpha-D-ribose 1-diphosphate: step 9/9.</text>
</comment>
<comment type="similarity">
    <text evidence="1">Belongs to the histidinol dehydrogenase family.</text>
</comment>
<proteinExistence type="inferred from homology"/>
<evidence type="ECO:0000255" key="1">
    <source>
        <dbReference type="HAMAP-Rule" id="MF_01024"/>
    </source>
</evidence>
<protein>
    <recommendedName>
        <fullName evidence="1">Histidinol dehydrogenase</fullName>
        <shortName evidence="1">HDH</shortName>
        <ecNumber evidence="1">1.1.1.23</ecNumber>
    </recommendedName>
</protein>
<keyword id="KW-0028">Amino-acid biosynthesis</keyword>
<keyword id="KW-0368">Histidine biosynthesis</keyword>
<keyword id="KW-0479">Metal-binding</keyword>
<keyword id="KW-0520">NAD</keyword>
<keyword id="KW-0560">Oxidoreductase</keyword>
<keyword id="KW-1185">Reference proteome</keyword>
<keyword id="KW-0862">Zinc</keyword>
<accession>Q4A044</accession>
<gene>
    <name evidence="1" type="primary">hisD</name>
    <name type="ordered locus">SSP0429</name>
</gene>
<name>HISX_STAS1</name>